<reference key="1">
    <citation type="journal article" date="2009" name="FEMS Microbiol. Lett.">
        <title>FabH selectivity for anteiso branched-chain fatty acid precursors in low-temperature adaptation in Listeria monocytogenes.</title>
        <authorList>
            <person name="Singh A.K."/>
            <person name="Zhang Y.M."/>
            <person name="Zhu K."/>
            <person name="Subramanian C."/>
            <person name="Li Z."/>
            <person name="Jayaswal R.K."/>
            <person name="Gatto C."/>
            <person name="Rock C.O."/>
            <person name="Wilkinson B.J."/>
        </authorList>
    </citation>
    <scope>NUCLEOTIDE SEQUENCE [GENOMIC DNA]</scope>
    <scope>FUNCTION</scope>
    <scope>CATALYTIC ACTIVITY</scope>
    <scope>BIOPHYSICOCHEMICAL PROPERTIES</scope>
    <source>
        <strain>10403S</strain>
    </source>
</reference>
<reference key="2">
    <citation type="submission" date="2010-04" db="EMBL/GenBank/DDBJ databases">
        <title>The genome sequence of Listeria monocytogenes strain 10403S.</title>
        <authorList>
            <consortium name="The Broad Institute Genome Sequencing Platform"/>
            <consortium name="The Broad Institute Genome Sequencing Center for Infectious Disease"/>
            <person name="Borowsky M."/>
            <person name="Borodovsky M."/>
            <person name="Young S.K."/>
            <person name="Zeng Q."/>
            <person name="Koehrsen M."/>
            <person name="Fitzgerald M."/>
            <person name="Wiedmann M."/>
            <person name="Swaminathan B."/>
            <person name="Lauer P."/>
            <person name="Portnoy D."/>
            <person name="Cossart P."/>
            <person name="Buchrieser C."/>
            <person name="Higgins D."/>
            <person name="Abouelleil A."/>
            <person name="Alvarado L."/>
            <person name="Arachchi H.M."/>
            <person name="Berlin A."/>
            <person name="Borenstein D."/>
            <person name="Brown A."/>
            <person name="Chapman S.B."/>
            <person name="Chen Z."/>
            <person name="Dunbar C.D."/>
            <person name="Engels R."/>
            <person name="Freedman E."/>
            <person name="Gearin G."/>
            <person name="Gellesch M."/>
            <person name="Goldberg J."/>
            <person name="Griggs A."/>
            <person name="Gujja S."/>
            <person name="Heilman E."/>
            <person name="Heiman D."/>
            <person name="Howarth C."/>
            <person name="Jen D."/>
            <person name="Larson L."/>
            <person name="Lui A."/>
            <person name="MacDonald J."/>
            <person name="Mehta T."/>
            <person name="Montmayeur A."/>
            <person name="Neiman D."/>
            <person name="Park D."/>
            <person name="Pearson M."/>
            <person name="Priest M."/>
            <person name="Richards J."/>
            <person name="Roberts A."/>
            <person name="Saif S."/>
            <person name="Shea T."/>
            <person name="Shenoy N."/>
            <person name="Sisk P."/>
            <person name="Stolte C."/>
            <person name="Sykes S."/>
            <person name="Walk T."/>
            <person name="White J."/>
            <person name="Yandava C."/>
            <person name="Haas B."/>
            <person name="Nusbaum C."/>
            <person name="Birren B."/>
        </authorList>
    </citation>
    <scope>NUCLEOTIDE SEQUENCE [LARGE SCALE GENOMIC DNA]</scope>
    <source>
        <strain>10403S</strain>
    </source>
</reference>
<accession>C0LNR0</accession>
<evidence type="ECO:0000255" key="1">
    <source>
        <dbReference type="HAMAP-Rule" id="MF_01815"/>
    </source>
</evidence>
<evidence type="ECO:0000269" key="2">
    <source>
    </source>
</evidence>
<evidence type="ECO:0000303" key="3">
    <source>
    </source>
</evidence>
<evidence type="ECO:0000305" key="4"/>
<evidence type="ECO:0000305" key="5">
    <source>
    </source>
</evidence>
<evidence type="ECO:0000312" key="6">
    <source>
        <dbReference type="EMBL" id="AEO07189.1"/>
    </source>
</evidence>
<comment type="function">
    <text evidence="2">Catalyzes the condensation reaction of fatty acid synthesis by the addition to an acyl acceptor of two carbons from malonyl-ACP. Catalyzes the first condensation reaction which initiates fatty acid synthesis and may therefore play a role in governing the total rate of fatty acid production. Possesses both acetoacetyl-ACP synthase and acetyl transacylase activities (PubMed:19863661). Can use branched-chain acyl-CoAs, with a preference for 2-methylbutanoyl-CoA, the precursor of odd-numbered anteiso fatty acids, at 30 degrees Celsius, which is further increased at a low temperature (PubMed:19863661). Shows weak activity with acetyl-CoA (PubMed:19863661).</text>
</comment>
<comment type="catalytic activity">
    <reaction evidence="2">
        <text>(2S)-2-methylbutanoyl-CoA + malonyl-[ACP] + H(+) = (4S)-4-methyl-3-oxohexanoyl-[ACP] + CO2 + CoA</text>
        <dbReference type="Rhea" id="RHEA:42276"/>
        <dbReference type="Rhea" id="RHEA-COMP:9623"/>
        <dbReference type="Rhea" id="RHEA-COMP:17148"/>
        <dbReference type="ChEBI" id="CHEBI:15378"/>
        <dbReference type="ChEBI" id="CHEBI:16526"/>
        <dbReference type="ChEBI" id="CHEBI:57287"/>
        <dbReference type="ChEBI" id="CHEBI:78449"/>
        <dbReference type="ChEBI" id="CHEBI:88166"/>
        <dbReference type="ChEBI" id="CHEBI:167462"/>
        <dbReference type="EC" id="2.3.1.300"/>
    </reaction>
    <physiologicalReaction direction="left-to-right" evidence="2">
        <dbReference type="Rhea" id="RHEA:42277"/>
    </physiologicalReaction>
</comment>
<comment type="catalytic activity">
    <reaction evidence="2">
        <text>2-methylpropanoyl-CoA + malonyl-[ACP] + H(+) = 4-methyl-3-oxopentanoyl-[ACP] + CO2 + CoA</text>
        <dbReference type="Rhea" id="RHEA:42268"/>
        <dbReference type="Rhea" id="RHEA-COMP:9623"/>
        <dbReference type="Rhea" id="RHEA-COMP:9940"/>
        <dbReference type="ChEBI" id="CHEBI:15378"/>
        <dbReference type="ChEBI" id="CHEBI:16526"/>
        <dbReference type="ChEBI" id="CHEBI:57287"/>
        <dbReference type="ChEBI" id="CHEBI:57338"/>
        <dbReference type="ChEBI" id="CHEBI:78449"/>
        <dbReference type="ChEBI" id="CHEBI:78820"/>
        <dbReference type="EC" id="2.3.1.300"/>
    </reaction>
    <physiologicalReaction direction="left-to-right" evidence="2">
        <dbReference type="Rhea" id="RHEA:42269"/>
    </physiologicalReaction>
</comment>
<comment type="catalytic activity">
    <reaction evidence="2">
        <text>3-methylbutanoyl-CoA + malonyl-[ACP] + H(+) = 5-methyl-3-oxohexanoyl-[ACP] + CO2 + CoA</text>
        <dbReference type="Rhea" id="RHEA:42272"/>
        <dbReference type="Rhea" id="RHEA-COMP:9623"/>
        <dbReference type="Rhea" id="RHEA-COMP:9941"/>
        <dbReference type="ChEBI" id="CHEBI:15378"/>
        <dbReference type="ChEBI" id="CHEBI:16526"/>
        <dbReference type="ChEBI" id="CHEBI:57287"/>
        <dbReference type="ChEBI" id="CHEBI:57345"/>
        <dbReference type="ChEBI" id="CHEBI:78449"/>
        <dbReference type="ChEBI" id="CHEBI:78822"/>
        <dbReference type="EC" id="2.3.1.300"/>
    </reaction>
    <physiologicalReaction direction="left-to-right" evidence="2">
        <dbReference type="Rhea" id="RHEA:42273"/>
    </physiologicalReaction>
</comment>
<comment type="catalytic activity">
    <reaction evidence="1 2">
        <text>malonyl-[ACP] + acetyl-CoA + H(+) = 3-oxobutanoyl-[ACP] + CO2 + CoA</text>
        <dbReference type="Rhea" id="RHEA:12080"/>
        <dbReference type="Rhea" id="RHEA-COMP:9623"/>
        <dbReference type="Rhea" id="RHEA-COMP:9625"/>
        <dbReference type="ChEBI" id="CHEBI:15378"/>
        <dbReference type="ChEBI" id="CHEBI:16526"/>
        <dbReference type="ChEBI" id="CHEBI:57287"/>
        <dbReference type="ChEBI" id="CHEBI:57288"/>
        <dbReference type="ChEBI" id="CHEBI:78449"/>
        <dbReference type="ChEBI" id="CHEBI:78450"/>
        <dbReference type="EC" id="2.3.1.180"/>
    </reaction>
    <physiologicalReaction direction="left-to-right" evidence="2">
        <dbReference type="Rhea" id="RHEA:12081"/>
    </physiologicalReaction>
</comment>
<comment type="biophysicochemical properties">
    <kinetics>
        <KM evidence="2">11 uM for 2-methylbutanoyl-CoA (at 30 degrees Celsius)</KM>
        <KM evidence="2">6.3 uM for 2-methylbutanoyl-CoA (at 10 degrees Celsius)</KM>
        <KM evidence="2">24.3 uM for 2-methylpropanoyl-CoA (at 30 degrees Celsius)</KM>
        <KM evidence="2">30.7 uM for 2-methylpropanoyl-CoA (at 10 degrees Celsius)</KM>
        <KM evidence="2">5.3 uM for 3-methylbutanoyl-CoA (at 30 degrees Celsius)</KM>
        <KM evidence="2">16.9 uM for 3-methylbutanoyl-CoA (at 10 degrees Celsius)</KM>
        <KM evidence="2">98.5 uM for acetyl-CoA (at 30 degrees Celsius)</KM>
        <Vmax evidence="2">16.5 nmol/min/ng enzyme with 2-methylbutanoyl-CoA as substrate (at 30 degrees Celsius)</Vmax>
        <Vmax evidence="2">13.0 nmol/min/ng enzyme with 2-methylbutanoyl-CoA as substrate (at 10 degrees Celsius)</Vmax>
        <Vmax evidence="2">11.4 nmol/min/ng enzyme with 2-methylpropanoyl-CoA as substrate (at 30 degrees Celsius)</Vmax>
        <Vmax evidence="2">28.5 nmol/min/ng enzyme with 2-methylpropanoyl-CoA as substrate (at 10 degrees Celsius)</Vmax>
        <Vmax evidence="2">4.3 nmol/min/ng enzyme with 3-methylbutanoyl-CoA as substrate (at 30 degrees Celsius)</Vmax>
        <Vmax evidence="2">5.1 nmol/min/ng enzyme with 3-methylbutanoyl-CoA as substrate (at 10 degrees Celsius)</Vmax>
        <Vmax evidence="2">7.5 nmol/min/ng enzyme with acetyl-CoA as substrate (at 30 degrees Celsius)</Vmax>
        <text evidence="2">kcat is 27.5 min(-1) (at 30 degrees Celsius) and 2.8 min(-1) (at 10 degrees Celsius) with 2-methylbutanoyl-CoA as substrate. kcat is 19.0 min(-1) (at 30 degrees Celsius) and 6.1 min(-1) (at 10 degrees Celsius) with 2-methylpropanoyl-CoA as substrate. kcat is 7.2 min(-1) (at 30 degrees Celsius) and 1.1 min(-1) (at 10 degrees Celsius) with 3-methylbutanoyl-CoA as substrate. kcat is 0.04 min(-1) (at 30 degrees Celsius) with acetyl-CoA as substrate.</text>
    </kinetics>
</comment>
<comment type="pathway">
    <text evidence="1 5">Lipid metabolism; fatty acid biosynthesis.</text>
</comment>
<comment type="subunit">
    <text evidence="1">Homodimer.</text>
</comment>
<comment type="subcellular location">
    <subcellularLocation>
        <location evidence="1">Cytoplasm</location>
    </subcellularLocation>
</comment>
<comment type="domain">
    <text evidence="1">The last Arg residue of the ACP-binding site is essential for the weak association between ACP/AcpP and FabH.</text>
</comment>
<comment type="similarity">
    <text evidence="1">Belongs to the thiolase-like superfamily. FabH family.</text>
</comment>
<proteinExistence type="evidence at protein level"/>
<feature type="chain" id="PRO_0000456710" description="Beta-ketoacyl-[acyl-carrier-protein] synthase III">
    <location>
        <begin position="1"/>
        <end position="312"/>
    </location>
</feature>
<feature type="region of interest" description="ACP-binding" evidence="1">
    <location>
        <begin position="238"/>
        <end position="242"/>
    </location>
</feature>
<feature type="active site" evidence="1">
    <location>
        <position position="112"/>
    </location>
</feature>
<feature type="active site" evidence="1">
    <location>
        <position position="237"/>
    </location>
</feature>
<feature type="active site" evidence="1">
    <location>
        <position position="267"/>
    </location>
</feature>
<name>FABH_LISM4</name>
<keyword id="KW-0012">Acyltransferase</keyword>
<keyword id="KW-0963">Cytoplasm</keyword>
<keyword id="KW-0275">Fatty acid biosynthesis</keyword>
<keyword id="KW-0276">Fatty acid metabolism</keyword>
<keyword id="KW-0444">Lipid biosynthesis</keyword>
<keyword id="KW-0443">Lipid metabolism</keyword>
<keyword id="KW-0511">Multifunctional enzyme</keyword>
<keyword id="KW-0808">Transferase</keyword>
<dbReference type="EC" id="2.3.1.180" evidence="1 2"/>
<dbReference type="EC" id="2.3.1.300" evidence="2"/>
<dbReference type="EMBL" id="FJ749129">
    <property type="protein sequence ID" value="ACN56323.1"/>
    <property type="molecule type" value="Genomic_DNA"/>
</dbReference>
<dbReference type="EMBL" id="CP002002">
    <property type="protein sequence ID" value="AEO07189.1"/>
    <property type="molecule type" value="Genomic_DNA"/>
</dbReference>
<dbReference type="RefSeq" id="WP_003722325.1">
    <property type="nucleotide sequence ID" value="NC_017544.1"/>
</dbReference>
<dbReference type="SMR" id="C0LNR0"/>
<dbReference type="KEGG" id="lmt:LMRG_01630"/>
<dbReference type="HOGENOM" id="CLU_039592_3_1_9"/>
<dbReference type="BRENDA" id="2.3.1.180">
    <property type="organism ID" value="3045"/>
</dbReference>
<dbReference type="BRENDA" id="2.3.1.300">
    <property type="organism ID" value="15002"/>
</dbReference>
<dbReference type="UniPathway" id="UPA00094"/>
<dbReference type="Proteomes" id="UP000001288">
    <property type="component" value="Chromosome"/>
</dbReference>
<dbReference type="GO" id="GO:0005737">
    <property type="term" value="C:cytoplasm"/>
    <property type="evidence" value="ECO:0007669"/>
    <property type="project" value="UniProtKB-SubCell"/>
</dbReference>
<dbReference type="GO" id="GO:0004315">
    <property type="term" value="F:3-oxoacyl-[acyl-carrier-protein] synthase activity"/>
    <property type="evidence" value="ECO:0007669"/>
    <property type="project" value="InterPro"/>
</dbReference>
<dbReference type="GO" id="GO:0033818">
    <property type="term" value="F:beta-ketoacyl-acyl-carrier-protein synthase III activity"/>
    <property type="evidence" value="ECO:0007669"/>
    <property type="project" value="UniProtKB-UniRule"/>
</dbReference>
<dbReference type="GO" id="GO:0006633">
    <property type="term" value="P:fatty acid biosynthetic process"/>
    <property type="evidence" value="ECO:0007669"/>
    <property type="project" value="UniProtKB-UniRule"/>
</dbReference>
<dbReference type="CDD" id="cd00830">
    <property type="entry name" value="KAS_III"/>
    <property type="match status" value="1"/>
</dbReference>
<dbReference type="FunFam" id="3.40.47.10:FF:000004">
    <property type="entry name" value="3-oxoacyl-[acyl-carrier-protein] synthase 3"/>
    <property type="match status" value="1"/>
</dbReference>
<dbReference type="Gene3D" id="3.40.47.10">
    <property type="match status" value="1"/>
</dbReference>
<dbReference type="HAMAP" id="MF_01815">
    <property type="entry name" value="FabH"/>
    <property type="match status" value="1"/>
</dbReference>
<dbReference type="InterPro" id="IPR013747">
    <property type="entry name" value="ACP_syn_III_C"/>
</dbReference>
<dbReference type="InterPro" id="IPR013751">
    <property type="entry name" value="ACP_syn_III_N"/>
</dbReference>
<dbReference type="InterPro" id="IPR004655">
    <property type="entry name" value="FabH"/>
</dbReference>
<dbReference type="InterPro" id="IPR016039">
    <property type="entry name" value="Thiolase-like"/>
</dbReference>
<dbReference type="NCBIfam" id="TIGR00747">
    <property type="entry name" value="fabH"/>
    <property type="match status" value="1"/>
</dbReference>
<dbReference type="NCBIfam" id="NF006829">
    <property type="entry name" value="PRK09352.1"/>
    <property type="match status" value="1"/>
</dbReference>
<dbReference type="PANTHER" id="PTHR43091">
    <property type="entry name" value="3-OXOACYL-[ACYL-CARRIER-PROTEIN] SYNTHASE"/>
    <property type="match status" value="1"/>
</dbReference>
<dbReference type="PANTHER" id="PTHR43091:SF1">
    <property type="entry name" value="BETA-KETOACYL-[ACYL-CARRIER-PROTEIN] SYNTHASE III, CHLOROPLASTIC"/>
    <property type="match status" value="1"/>
</dbReference>
<dbReference type="Pfam" id="PF08545">
    <property type="entry name" value="ACP_syn_III"/>
    <property type="match status" value="1"/>
</dbReference>
<dbReference type="Pfam" id="PF08541">
    <property type="entry name" value="ACP_syn_III_C"/>
    <property type="match status" value="1"/>
</dbReference>
<dbReference type="SUPFAM" id="SSF53901">
    <property type="entry name" value="Thiolase-like"/>
    <property type="match status" value="1"/>
</dbReference>
<sequence length="312" mass="33971">MNAGILGVGKYVPEKIVTNFDLEKIMDTSDEWIRTRTGIEERRIARDDEYTHDLAYEAAKVAIKNAGLTPDDIDLFIVATVTQEATFPSVANIIQDRLGAKNAAGMDVEAACAGFTFGVVTAAQFIKTGAYKNIVVVGADKLSKITNWDDRTTAVLFGDGAGAVVMGPVSDDHGLLSFDLGSDGSGGKYLNLDENKKIYMNGREVFRFAVRQMGEASLRVLERAGLEKEDLDLLIPHQANIRIMEASRERLNLPEEKLMKTVHKYGNTSSSSIALALVDAVEEGRIKDNDNVLLVGFGGGLTWGALIIRWGK</sequence>
<organism>
    <name type="scientific">Listeria monocytogenes serotype 1/2a (strain 10403S)</name>
    <dbReference type="NCBI Taxonomy" id="393133"/>
    <lineage>
        <taxon>Bacteria</taxon>
        <taxon>Bacillati</taxon>
        <taxon>Bacillota</taxon>
        <taxon>Bacilli</taxon>
        <taxon>Bacillales</taxon>
        <taxon>Listeriaceae</taxon>
        <taxon>Listeria</taxon>
    </lineage>
</organism>
<gene>
    <name evidence="1 3" type="primary">fabH</name>
    <name evidence="6" type="ordered locus">LMRG_01630</name>
</gene>
<protein>
    <recommendedName>
        <fullName evidence="1 3">Beta-ketoacyl-[acyl-carrier-protein] synthase III</fullName>
        <shortName evidence="1">Beta-ketoacyl-ACP synthase III</shortName>
        <shortName evidence="1">KAS III</shortName>
        <ecNumber evidence="1 2">2.3.1.180</ecNumber>
        <ecNumber evidence="2">2.3.1.300</ecNumber>
    </recommendedName>
    <alternativeName>
        <fullName evidence="1">3-oxoacyl-[acyl-carrier-protein] synthase 3</fullName>
    </alternativeName>
    <alternativeName>
        <fullName evidence="1">3-oxoacyl-[acyl-carrier-protein] synthase III</fullName>
    </alternativeName>
    <alternativeName>
        <fullName evidence="4">Branched-chain beta-ketoacyl-[acyl-carrier-protein] synthase</fullName>
    </alternativeName>
</protein>